<evidence type="ECO:0000250" key="1"/>
<evidence type="ECO:0000255" key="2"/>
<evidence type="ECO:0000255" key="3">
    <source>
        <dbReference type="PROSITE-ProRule" id="PRU01375"/>
    </source>
</evidence>
<evidence type="ECO:0000305" key="4"/>
<evidence type="ECO:0007829" key="5">
    <source>
        <dbReference type="PDB" id="7ECQ"/>
    </source>
</evidence>
<reference key="1">
    <citation type="journal article" date="2005" name="Science">
        <title>The transcriptional landscape of the mammalian genome.</title>
        <authorList>
            <person name="Carninci P."/>
            <person name="Kasukawa T."/>
            <person name="Katayama S."/>
            <person name="Gough J."/>
            <person name="Frith M.C."/>
            <person name="Maeda N."/>
            <person name="Oyama R."/>
            <person name="Ravasi T."/>
            <person name="Lenhard B."/>
            <person name="Wells C."/>
            <person name="Kodzius R."/>
            <person name="Shimokawa K."/>
            <person name="Bajic V.B."/>
            <person name="Brenner S.E."/>
            <person name="Batalov S."/>
            <person name="Forrest A.R."/>
            <person name="Zavolan M."/>
            <person name="Davis M.J."/>
            <person name="Wilming L.G."/>
            <person name="Aidinis V."/>
            <person name="Allen J.E."/>
            <person name="Ambesi-Impiombato A."/>
            <person name="Apweiler R."/>
            <person name="Aturaliya R.N."/>
            <person name="Bailey T.L."/>
            <person name="Bansal M."/>
            <person name="Baxter L."/>
            <person name="Beisel K.W."/>
            <person name="Bersano T."/>
            <person name="Bono H."/>
            <person name="Chalk A.M."/>
            <person name="Chiu K.P."/>
            <person name="Choudhary V."/>
            <person name="Christoffels A."/>
            <person name="Clutterbuck D.R."/>
            <person name="Crowe M.L."/>
            <person name="Dalla E."/>
            <person name="Dalrymple B.P."/>
            <person name="de Bono B."/>
            <person name="Della Gatta G."/>
            <person name="di Bernardo D."/>
            <person name="Down T."/>
            <person name="Engstrom P."/>
            <person name="Fagiolini M."/>
            <person name="Faulkner G."/>
            <person name="Fletcher C.F."/>
            <person name="Fukushima T."/>
            <person name="Furuno M."/>
            <person name="Futaki S."/>
            <person name="Gariboldi M."/>
            <person name="Georgii-Hemming P."/>
            <person name="Gingeras T.R."/>
            <person name="Gojobori T."/>
            <person name="Green R.E."/>
            <person name="Gustincich S."/>
            <person name="Harbers M."/>
            <person name="Hayashi Y."/>
            <person name="Hensch T.K."/>
            <person name="Hirokawa N."/>
            <person name="Hill D."/>
            <person name="Huminiecki L."/>
            <person name="Iacono M."/>
            <person name="Ikeo K."/>
            <person name="Iwama A."/>
            <person name="Ishikawa T."/>
            <person name="Jakt M."/>
            <person name="Kanapin A."/>
            <person name="Katoh M."/>
            <person name="Kawasawa Y."/>
            <person name="Kelso J."/>
            <person name="Kitamura H."/>
            <person name="Kitano H."/>
            <person name="Kollias G."/>
            <person name="Krishnan S.P."/>
            <person name="Kruger A."/>
            <person name="Kummerfeld S.K."/>
            <person name="Kurochkin I.V."/>
            <person name="Lareau L.F."/>
            <person name="Lazarevic D."/>
            <person name="Lipovich L."/>
            <person name="Liu J."/>
            <person name="Liuni S."/>
            <person name="McWilliam S."/>
            <person name="Madan Babu M."/>
            <person name="Madera M."/>
            <person name="Marchionni L."/>
            <person name="Matsuda H."/>
            <person name="Matsuzawa S."/>
            <person name="Miki H."/>
            <person name="Mignone F."/>
            <person name="Miyake S."/>
            <person name="Morris K."/>
            <person name="Mottagui-Tabar S."/>
            <person name="Mulder N."/>
            <person name="Nakano N."/>
            <person name="Nakauchi H."/>
            <person name="Ng P."/>
            <person name="Nilsson R."/>
            <person name="Nishiguchi S."/>
            <person name="Nishikawa S."/>
            <person name="Nori F."/>
            <person name="Ohara O."/>
            <person name="Okazaki Y."/>
            <person name="Orlando V."/>
            <person name="Pang K.C."/>
            <person name="Pavan W.J."/>
            <person name="Pavesi G."/>
            <person name="Pesole G."/>
            <person name="Petrovsky N."/>
            <person name="Piazza S."/>
            <person name="Reed J."/>
            <person name="Reid J.F."/>
            <person name="Ring B.Z."/>
            <person name="Ringwald M."/>
            <person name="Rost B."/>
            <person name="Ruan Y."/>
            <person name="Salzberg S.L."/>
            <person name="Sandelin A."/>
            <person name="Schneider C."/>
            <person name="Schoenbach C."/>
            <person name="Sekiguchi K."/>
            <person name="Semple C.A."/>
            <person name="Seno S."/>
            <person name="Sessa L."/>
            <person name="Sheng Y."/>
            <person name="Shibata Y."/>
            <person name="Shimada H."/>
            <person name="Shimada K."/>
            <person name="Silva D."/>
            <person name="Sinclair B."/>
            <person name="Sperling S."/>
            <person name="Stupka E."/>
            <person name="Sugiura K."/>
            <person name="Sultana R."/>
            <person name="Takenaka Y."/>
            <person name="Taki K."/>
            <person name="Tammoja K."/>
            <person name="Tan S.L."/>
            <person name="Tang S."/>
            <person name="Taylor M.S."/>
            <person name="Tegner J."/>
            <person name="Teichmann S.A."/>
            <person name="Ueda H.R."/>
            <person name="van Nimwegen E."/>
            <person name="Verardo R."/>
            <person name="Wei C.L."/>
            <person name="Yagi K."/>
            <person name="Yamanishi H."/>
            <person name="Zabarovsky E."/>
            <person name="Zhu S."/>
            <person name="Zimmer A."/>
            <person name="Hide W."/>
            <person name="Bult C."/>
            <person name="Grimmond S.M."/>
            <person name="Teasdale R.D."/>
            <person name="Liu E.T."/>
            <person name="Brusic V."/>
            <person name="Quackenbush J."/>
            <person name="Wahlestedt C."/>
            <person name="Mattick J.S."/>
            <person name="Hume D.A."/>
            <person name="Kai C."/>
            <person name="Sasaki D."/>
            <person name="Tomaru Y."/>
            <person name="Fukuda S."/>
            <person name="Kanamori-Katayama M."/>
            <person name="Suzuki M."/>
            <person name="Aoki J."/>
            <person name="Arakawa T."/>
            <person name="Iida J."/>
            <person name="Imamura K."/>
            <person name="Itoh M."/>
            <person name="Kato T."/>
            <person name="Kawaji H."/>
            <person name="Kawagashira N."/>
            <person name="Kawashima T."/>
            <person name="Kojima M."/>
            <person name="Kondo S."/>
            <person name="Konno H."/>
            <person name="Nakano K."/>
            <person name="Ninomiya N."/>
            <person name="Nishio T."/>
            <person name="Okada M."/>
            <person name="Plessy C."/>
            <person name="Shibata K."/>
            <person name="Shiraki T."/>
            <person name="Suzuki S."/>
            <person name="Tagami M."/>
            <person name="Waki K."/>
            <person name="Watahiki A."/>
            <person name="Okamura-Oho Y."/>
            <person name="Suzuki H."/>
            <person name="Kawai J."/>
            <person name="Hayashizaki Y."/>
        </authorList>
    </citation>
    <scope>NUCLEOTIDE SEQUENCE [LARGE SCALE MRNA]</scope>
    <source>
        <strain>C57BL/6J</strain>
        <tissue>Pancreas</tissue>
    </source>
</reference>
<reference key="2">
    <citation type="journal article" date="2004" name="Genome Res.">
        <title>The status, quality, and expansion of the NIH full-length cDNA project: the Mammalian Gene Collection (MGC).</title>
        <authorList>
            <consortium name="The MGC Project Team"/>
        </authorList>
    </citation>
    <scope>NUCLEOTIDE SEQUENCE [LARGE SCALE MRNA]</scope>
    <source>
        <tissue>Eye</tissue>
    </source>
</reference>
<sequence length="230" mass="25394">MRLAGPLRIVALIIIMGLTWILVTILLGGPGVGLPRIQQFFTSPENSVTAEPRARKYKCGLPQPCPEEHLSFRIVSGAANVIGPKICLEDKMLMSSVKDNVGRGLNIALVNGVSGELLEARAFDMWAGDVNDLLKFIRPLHEGTLVFVASYDDPATKMNEETRKLFSELGSRNAKDLAFRDSWVFVGAKGVQNKSPFEQHMKNSKHTNKYEGWPEALEMEGCIPRRSIAG</sequence>
<accession>Q9D8T0</accession>
<name>FAM3A_MOUSE</name>
<protein>
    <recommendedName>
        <fullName>Protein FAM3A</fullName>
    </recommendedName>
</protein>
<gene>
    <name type="primary">Fam3a</name>
</gene>
<dbReference type="EMBL" id="AK007715">
    <property type="protein sequence ID" value="BAB25208.1"/>
    <property type="molecule type" value="mRNA"/>
</dbReference>
<dbReference type="EMBL" id="BC069871">
    <property type="protein sequence ID" value="AAH69871.1"/>
    <property type="molecule type" value="mRNA"/>
</dbReference>
<dbReference type="CCDS" id="CCDS41022.1"/>
<dbReference type="RefSeq" id="NP_001300654.1">
    <property type="nucleotide sequence ID" value="NM_001313725.2"/>
</dbReference>
<dbReference type="RefSeq" id="NP_079749.1">
    <property type="nucleotide sequence ID" value="NM_025473.5"/>
</dbReference>
<dbReference type="PDB" id="7ECQ">
    <property type="method" value="X-ray"/>
    <property type="resolution" value="1.38 A"/>
    <property type="chains" value="A=56-230"/>
</dbReference>
<dbReference type="PDBsum" id="7ECQ"/>
<dbReference type="SMR" id="Q9D8T0"/>
<dbReference type="FunCoup" id="Q9D8T0">
    <property type="interactions" value="491"/>
</dbReference>
<dbReference type="STRING" id="10090.ENSMUSP00000109779"/>
<dbReference type="PhosphoSitePlus" id="Q9D8T0"/>
<dbReference type="PaxDb" id="10090-ENSMUSP00000109779"/>
<dbReference type="ProteomicsDB" id="275585"/>
<dbReference type="Pumba" id="Q9D8T0"/>
<dbReference type="TopDownProteomics" id="Q9D8T0"/>
<dbReference type="Antibodypedia" id="45386">
    <property type="antibodies" value="154 antibodies from 24 providers"/>
</dbReference>
<dbReference type="Ensembl" id="ENSMUST00000015427.13">
    <property type="protein sequence ID" value="ENSMUSP00000015427.7"/>
    <property type="gene ID" value="ENSMUSG00000031399.16"/>
</dbReference>
<dbReference type="Ensembl" id="ENSMUST00000114142.8">
    <property type="protein sequence ID" value="ENSMUSP00000109778.2"/>
    <property type="gene ID" value="ENSMUSG00000031399.16"/>
</dbReference>
<dbReference type="Ensembl" id="ENSMUST00000114143.10">
    <property type="protein sequence ID" value="ENSMUSP00000109779.4"/>
    <property type="gene ID" value="ENSMUSG00000031399.16"/>
</dbReference>
<dbReference type="GeneID" id="66294"/>
<dbReference type="KEGG" id="mmu:66294"/>
<dbReference type="UCSC" id="uc009tow.2">
    <property type="organism name" value="mouse"/>
</dbReference>
<dbReference type="AGR" id="MGI:1913544"/>
<dbReference type="CTD" id="60343"/>
<dbReference type="MGI" id="MGI:1913544">
    <property type="gene designation" value="Fam3a"/>
</dbReference>
<dbReference type="VEuPathDB" id="HostDB:ENSMUSG00000031399"/>
<dbReference type="eggNOG" id="ENOG502QUEU">
    <property type="taxonomic scope" value="Eukaryota"/>
</dbReference>
<dbReference type="GeneTree" id="ENSGT00950000183004"/>
<dbReference type="InParanoid" id="Q9D8T0"/>
<dbReference type="PhylomeDB" id="Q9D8T0"/>
<dbReference type="TreeFam" id="TF353414"/>
<dbReference type="BioGRID-ORCS" id="66294">
    <property type="hits" value="2 hits in 77 CRISPR screens"/>
</dbReference>
<dbReference type="ChiTaRS" id="Fam3a">
    <property type="organism name" value="mouse"/>
</dbReference>
<dbReference type="PRO" id="PR:Q9D8T0"/>
<dbReference type="Proteomes" id="UP000000589">
    <property type="component" value="Chromosome X"/>
</dbReference>
<dbReference type="RNAct" id="Q9D8T0">
    <property type="molecule type" value="protein"/>
</dbReference>
<dbReference type="Bgee" id="ENSMUSG00000031399">
    <property type="expression patterns" value="Expressed in otolith organ and 227 other cell types or tissues"/>
</dbReference>
<dbReference type="ExpressionAtlas" id="Q9D8T0">
    <property type="expression patterns" value="baseline and differential"/>
</dbReference>
<dbReference type="GO" id="GO:0005576">
    <property type="term" value="C:extracellular region"/>
    <property type="evidence" value="ECO:0007669"/>
    <property type="project" value="UniProtKB-SubCell"/>
</dbReference>
<dbReference type="GO" id="GO:0030246">
    <property type="term" value="F:carbohydrate binding"/>
    <property type="evidence" value="ECO:0007669"/>
    <property type="project" value="UniProtKB-KW"/>
</dbReference>
<dbReference type="GO" id="GO:0019732">
    <property type="term" value="P:antifungal humoral response"/>
    <property type="evidence" value="ECO:0007669"/>
    <property type="project" value="Ensembl"/>
</dbReference>
<dbReference type="GO" id="GO:0061844">
    <property type="term" value="P:antimicrobial humoral immune response mediated by antimicrobial peptide"/>
    <property type="evidence" value="ECO:0007669"/>
    <property type="project" value="Ensembl"/>
</dbReference>
<dbReference type="GO" id="GO:0006754">
    <property type="term" value="P:ATP biosynthetic process"/>
    <property type="evidence" value="ECO:0000315"/>
    <property type="project" value="MGI"/>
</dbReference>
<dbReference type="GO" id="GO:0055074">
    <property type="term" value="P:calcium ion homeostasis"/>
    <property type="evidence" value="ECO:0000315"/>
    <property type="project" value="MGI"/>
</dbReference>
<dbReference type="GO" id="GO:0010467">
    <property type="term" value="P:gene expression"/>
    <property type="evidence" value="ECO:0000314"/>
    <property type="project" value="MGI"/>
</dbReference>
<dbReference type="GO" id="GO:0006006">
    <property type="term" value="P:glucose metabolic process"/>
    <property type="evidence" value="ECO:0000315"/>
    <property type="project" value="MGI"/>
</dbReference>
<dbReference type="GO" id="GO:0030073">
    <property type="term" value="P:insulin secretion"/>
    <property type="evidence" value="ECO:0000314"/>
    <property type="project" value="MGI"/>
</dbReference>
<dbReference type="GO" id="GO:0007005">
    <property type="term" value="P:mitochondrion organization"/>
    <property type="evidence" value="ECO:0000315"/>
    <property type="project" value="MGI"/>
</dbReference>
<dbReference type="GO" id="GO:1905035">
    <property type="term" value="P:negative regulation of antifungal innate immune response"/>
    <property type="evidence" value="ECO:0007669"/>
    <property type="project" value="Ensembl"/>
</dbReference>
<dbReference type="GO" id="GO:0009749">
    <property type="term" value="P:response to glucose"/>
    <property type="evidence" value="ECO:0000315"/>
    <property type="project" value="MGI"/>
</dbReference>
<dbReference type="CDD" id="cd13940">
    <property type="entry name" value="ILEI_FAM3C"/>
    <property type="match status" value="1"/>
</dbReference>
<dbReference type="InterPro" id="IPR039220">
    <property type="entry name" value="FAM3"/>
</dbReference>
<dbReference type="InterPro" id="IPR039477">
    <property type="entry name" value="ILEI/PANDER_dom"/>
</dbReference>
<dbReference type="InterPro" id="IPR039475">
    <property type="entry name" value="ILEI_FAM3C"/>
</dbReference>
<dbReference type="PANTHER" id="PTHR14592">
    <property type="entry name" value="UNCHARACTERIZED FAM3"/>
    <property type="match status" value="1"/>
</dbReference>
<dbReference type="Pfam" id="PF15711">
    <property type="entry name" value="ILEI"/>
    <property type="match status" value="1"/>
</dbReference>
<dbReference type="PROSITE" id="PS52031">
    <property type="entry name" value="GG_LECTIN"/>
    <property type="match status" value="1"/>
</dbReference>
<proteinExistence type="evidence at protein level"/>
<keyword id="KW-0002">3D-structure</keyword>
<keyword id="KW-1015">Disulfide bond</keyword>
<keyword id="KW-0430">Lectin</keyword>
<keyword id="KW-1185">Reference proteome</keyword>
<keyword id="KW-0964">Secreted</keyword>
<keyword id="KW-0732">Signal</keyword>
<feature type="signal peptide" evidence="2">
    <location>
        <begin position="1"/>
        <end position="33"/>
    </location>
</feature>
<feature type="chain" id="PRO_0000008749" description="Protein FAM3A">
    <location>
        <begin position="34"/>
        <end position="230"/>
    </location>
</feature>
<feature type="domain" description="GG-type lectin" evidence="3">
    <location>
        <begin position="68"/>
        <end position="226"/>
    </location>
</feature>
<feature type="disulfide bond" evidence="1">
    <location>
        <begin position="59"/>
        <end position="87"/>
    </location>
</feature>
<feature type="disulfide bond" evidence="1">
    <location>
        <begin position="65"/>
        <end position="222"/>
    </location>
</feature>
<feature type="helix" evidence="5">
    <location>
        <begin position="58"/>
        <end position="60"/>
    </location>
</feature>
<feature type="strand" evidence="5">
    <location>
        <begin position="70"/>
        <end position="75"/>
    </location>
</feature>
<feature type="turn" evidence="5">
    <location>
        <begin position="79"/>
        <end position="81"/>
    </location>
</feature>
<feature type="strand" evidence="5">
    <location>
        <begin position="85"/>
        <end position="88"/>
    </location>
</feature>
<feature type="strand" evidence="5">
    <location>
        <begin position="91"/>
        <end position="94"/>
    </location>
</feature>
<feature type="turn" evidence="5">
    <location>
        <begin position="96"/>
        <end position="99"/>
    </location>
</feature>
<feature type="strand" evidence="5">
    <location>
        <begin position="103"/>
        <end position="110"/>
    </location>
</feature>
<feature type="turn" evidence="5">
    <location>
        <begin position="112"/>
        <end position="114"/>
    </location>
</feature>
<feature type="strand" evidence="5">
    <location>
        <begin position="117"/>
        <end position="123"/>
    </location>
</feature>
<feature type="turn" evidence="5">
    <location>
        <begin position="125"/>
        <end position="127"/>
    </location>
</feature>
<feature type="helix" evidence="5">
    <location>
        <begin position="130"/>
        <end position="137"/>
    </location>
</feature>
<feature type="strand" evidence="5">
    <location>
        <begin position="145"/>
        <end position="152"/>
    </location>
</feature>
<feature type="helix" evidence="5">
    <location>
        <begin position="160"/>
        <end position="168"/>
    </location>
</feature>
<feature type="helix" evidence="5">
    <location>
        <begin position="174"/>
        <end position="176"/>
    </location>
</feature>
<feature type="strand" evidence="5">
    <location>
        <begin position="182"/>
        <end position="188"/>
    </location>
</feature>
<feature type="strand" evidence="5">
    <location>
        <begin position="198"/>
        <end position="201"/>
    </location>
</feature>
<feature type="turn" evidence="5">
    <location>
        <begin position="205"/>
        <end position="207"/>
    </location>
</feature>
<feature type="strand" evidence="5">
    <location>
        <begin position="218"/>
        <end position="223"/>
    </location>
</feature>
<comment type="subcellular location">
    <subcellularLocation>
        <location evidence="4">Secreted</location>
    </subcellularLocation>
</comment>
<comment type="similarity">
    <text evidence="4">Belongs to the FAM3 family.</text>
</comment>
<organism>
    <name type="scientific">Mus musculus</name>
    <name type="common">Mouse</name>
    <dbReference type="NCBI Taxonomy" id="10090"/>
    <lineage>
        <taxon>Eukaryota</taxon>
        <taxon>Metazoa</taxon>
        <taxon>Chordata</taxon>
        <taxon>Craniata</taxon>
        <taxon>Vertebrata</taxon>
        <taxon>Euteleostomi</taxon>
        <taxon>Mammalia</taxon>
        <taxon>Eutheria</taxon>
        <taxon>Euarchontoglires</taxon>
        <taxon>Glires</taxon>
        <taxon>Rodentia</taxon>
        <taxon>Myomorpha</taxon>
        <taxon>Muroidea</taxon>
        <taxon>Muridae</taxon>
        <taxon>Murinae</taxon>
        <taxon>Mus</taxon>
        <taxon>Mus</taxon>
    </lineage>
</organism>